<accession>Q5XDM4</accession>
<accession>P82554</accession>
<accession>Q9A192</accession>
<protein>
    <recommendedName>
        <fullName evidence="1">ATP-dependent Clp protease proteolytic subunit</fullName>
        <ecNumber evidence="1">3.4.21.92</ecNumber>
    </recommendedName>
    <alternativeName>
        <fullName evidence="1">Endopeptidase Clp</fullName>
    </alternativeName>
</protein>
<evidence type="ECO:0000255" key="1">
    <source>
        <dbReference type="HAMAP-Rule" id="MF_00444"/>
    </source>
</evidence>
<evidence type="ECO:0000269" key="2">
    <source ref="2"/>
</evidence>
<proteinExistence type="evidence at protein level"/>
<organism>
    <name type="scientific">Streptococcus pyogenes serotype M6 (strain ATCC BAA-946 / MGAS10394)</name>
    <dbReference type="NCBI Taxonomy" id="286636"/>
    <lineage>
        <taxon>Bacteria</taxon>
        <taxon>Bacillati</taxon>
        <taxon>Bacillota</taxon>
        <taxon>Bacilli</taxon>
        <taxon>Lactobacillales</taxon>
        <taxon>Streptococcaceae</taxon>
        <taxon>Streptococcus</taxon>
    </lineage>
</organism>
<keyword id="KW-0963">Cytoplasm</keyword>
<keyword id="KW-0903">Direct protein sequencing</keyword>
<keyword id="KW-0378">Hydrolase</keyword>
<keyword id="KW-0645">Protease</keyword>
<keyword id="KW-0720">Serine protease</keyword>
<sequence length="196" mass="21649">MIPVVIEQTSRGERSYDIYSRLLKDRIIMLTGPVEDNMANSVIAQLLFLDAQDNTKDIYLYVNTPGGSVSAGLAIVDTMNFIKADVQTIVMGMAASMGTVIASSGTKGKRFMLPNAEYMIHQPMGGTGGGTQQTDMAIAAEHLLKTRHRLEKILAQNAGKTIKQIHKDAERDYWMSAEETLAYGFIDEIMENNELK</sequence>
<dbReference type="EC" id="3.4.21.92" evidence="1"/>
<dbReference type="EMBL" id="CP000003">
    <property type="protein sequence ID" value="AAT86489.1"/>
    <property type="molecule type" value="Genomic_DNA"/>
</dbReference>
<dbReference type="RefSeq" id="WP_002985850.1">
    <property type="nucleotide sequence ID" value="NC_006086.1"/>
</dbReference>
<dbReference type="SMR" id="Q5XDM4"/>
<dbReference type="MEROPS" id="S14.001"/>
<dbReference type="KEGG" id="spa:M6_Spy0354"/>
<dbReference type="HOGENOM" id="CLU_058707_3_2_9"/>
<dbReference type="Proteomes" id="UP000001167">
    <property type="component" value="Chromosome"/>
</dbReference>
<dbReference type="GO" id="GO:0005737">
    <property type="term" value="C:cytoplasm"/>
    <property type="evidence" value="ECO:0007669"/>
    <property type="project" value="UniProtKB-SubCell"/>
</dbReference>
<dbReference type="GO" id="GO:0009368">
    <property type="term" value="C:endopeptidase Clp complex"/>
    <property type="evidence" value="ECO:0007669"/>
    <property type="project" value="TreeGrafter"/>
</dbReference>
<dbReference type="GO" id="GO:0004176">
    <property type="term" value="F:ATP-dependent peptidase activity"/>
    <property type="evidence" value="ECO:0007669"/>
    <property type="project" value="InterPro"/>
</dbReference>
<dbReference type="GO" id="GO:0051117">
    <property type="term" value="F:ATPase binding"/>
    <property type="evidence" value="ECO:0007669"/>
    <property type="project" value="TreeGrafter"/>
</dbReference>
<dbReference type="GO" id="GO:0004252">
    <property type="term" value="F:serine-type endopeptidase activity"/>
    <property type="evidence" value="ECO:0007669"/>
    <property type="project" value="UniProtKB-UniRule"/>
</dbReference>
<dbReference type="GO" id="GO:0006515">
    <property type="term" value="P:protein quality control for misfolded or incompletely synthesized proteins"/>
    <property type="evidence" value="ECO:0007669"/>
    <property type="project" value="TreeGrafter"/>
</dbReference>
<dbReference type="CDD" id="cd07017">
    <property type="entry name" value="S14_ClpP_2"/>
    <property type="match status" value="1"/>
</dbReference>
<dbReference type="FunFam" id="3.90.226.10:FF:000014">
    <property type="entry name" value="ATP-dependent Clp protease proteolytic subunit"/>
    <property type="match status" value="1"/>
</dbReference>
<dbReference type="Gene3D" id="3.90.226.10">
    <property type="entry name" value="2-enoyl-CoA Hydratase, Chain A, domain 1"/>
    <property type="match status" value="1"/>
</dbReference>
<dbReference type="HAMAP" id="MF_00444">
    <property type="entry name" value="ClpP"/>
    <property type="match status" value="1"/>
</dbReference>
<dbReference type="InterPro" id="IPR001907">
    <property type="entry name" value="ClpP"/>
</dbReference>
<dbReference type="InterPro" id="IPR029045">
    <property type="entry name" value="ClpP/crotonase-like_dom_sf"/>
</dbReference>
<dbReference type="InterPro" id="IPR023562">
    <property type="entry name" value="ClpP/TepA"/>
</dbReference>
<dbReference type="InterPro" id="IPR033135">
    <property type="entry name" value="ClpP_His_AS"/>
</dbReference>
<dbReference type="InterPro" id="IPR018215">
    <property type="entry name" value="ClpP_Ser_AS"/>
</dbReference>
<dbReference type="NCBIfam" id="NF001368">
    <property type="entry name" value="PRK00277.1"/>
    <property type="match status" value="1"/>
</dbReference>
<dbReference type="NCBIfam" id="NF009205">
    <property type="entry name" value="PRK12553.1"/>
    <property type="match status" value="1"/>
</dbReference>
<dbReference type="PANTHER" id="PTHR10381">
    <property type="entry name" value="ATP-DEPENDENT CLP PROTEASE PROTEOLYTIC SUBUNIT"/>
    <property type="match status" value="1"/>
</dbReference>
<dbReference type="PANTHER" id="PTHR10381:SF70">
    <property type="entry name" value="ATP-DEPENDENT CLP PROTEASE PROTEOLYTIC SUBUNIT"/>
    <property type="match status" value="1"/>
</dbReference>
<dbReference type="Pfam" id="PF00574">
    <property type="entry name" value="CLP_protease"/>
    <property type="match status" value="1"/>
</dbReference>
<dbReference type="PRINTS" id="PR00127">
    <property type="entry name" value="CLPPROTEASEP"/>
</dbReference>
<dbReference type="SUPFAM" id="SSF52096">
    <property type="entry name" value="ClpP/crotonase"/>
    <property type="match status" value="1"/>
</dbReference>
<dbReference type="PROSITE" id="PS00382">
    <property type="entry name" value="CLP_PROTEASE_HIS"/>
    <property type="match status" value="1"/>
</dbReference>
<dbReference type="PROSITE" id="PS00381">
    <property type="entry name" value="CLP_PROTEASE_SER"/>
    <property type="match status" value="1"/>
</dbReference>
<comment type="function">
    <text evidence="1">Cleaves peptides in various proteins in a process that requires ATP hydrolysis. Has a chymotrypsin-like activity. Plays a major role in the degradation of misfolded proteins.</text>
</comment>
<comment type="catalytic activity">
    <reaction evidence="1">
        <text>Hydrolysis of proteins to small peptides in the presence of ATP and magnesium. alpha-casein is the usual test substrate. In the absence of ATP, only oligopeptides shorter than five residues are hydrolyzed (such as succinyl-Leu-Tyr-|-NHMec, and Leu-Tyr-Leu-|-Tyr-Trp, in which cleavage of the -Tyr-|-Leu- and -Tyr-|-Trp bonds also occurs).</text>
        <dbReference type="EC" id="3.4.21.92"/>
    </reaction>
</comment>
<comment type="subunit">
    <text evidence="1">Fourteen ClpP subunits assemble into 2 heptameric rings which stack back to back to give a disk-like structure with a central cavity, resembling the structure of eukaryotic proteasomes.</text>
</comment>
<comment type="subcellular location">
    <subcellularLocation>
        <location evidence="1">Cytoplasm</location>
    </subcellularLocation>
</comment>
<comment type="mass spectrometry" mass="21648.88" method="Electrospray" evidence="2"/>
<comment type="similarity">
    <text evidence="1">Belongs to the peptidase S14 family.</text>
</comment>
<name>CLPP_STRP6</name>
<gene>
    <name evidence="1" type="primary">clpP</name>
    <name type="ordered locus">M6_Spy0354</name>
</gene>
<feature type="chain" id="PRO_0000179674" description="ATP-dependent Clp protease proteolytic subunit">
    <location>
        <begin position="1"/>
        <end position="196"/>
    </location>
</feature>
<feature type="active site" description="Nucleophile" evidence="1">
    <location>
        <position position="96"/>
    </location>
</feature>
<feature type="active site" evidence="1">
    <location>
        <position position="121"/>
    </location>
</feature>
<reference key="1">
    <citation type="journal article" date="2004" name="J. Infect. Dis.">
        <title>Progress toward characterization of the group A Streptococcus metagenome: complete genome sequence of a macrolide-resistant serotype M6 strain.</title>
        <authorList>
            <person name="Banks D.J."/>
            <person name="Porcella S.F."/>
            <person name="Barbian K.D."/>
            <person name="Beres S.B."/>
            <person name="Philips L.E."/>
            <person name="Voyich J.M."/>
            <person name="DeLeo F.R."/>
            <person name="Martin J.M."/>
            <person name="Somerville G.A."/>
            <person name="Musser J.M."/>
        </authorList>
    </citation>
    <scope>NUCLEOTIDE SEQUENCE [LARGE SCALE GENOMIC DNA]</scope>
    <source>
        <strain>ATCC BAA-946 / MGAS10394</strain>
    </source>
</reference>
<reference key="2">
    <citation type="submission" date="2000-05" db="UniProtKB">
        <title>Two-dimensional gel electrophoresis map of Streptococcus pyogenes proteins.</title>
        <authorList>
            <person name="Hogan D.A."/>
            <person name="Du P."/>
            <person name="Stevenson T.I."/>
            <person name="Whitton M."/>
            <person name="Kilby G.W."/>
            <person name="Rogers J."/>
            <person name="VanBogelen R.A."/>
        </authorList>
    </citation>
    <scope>PROTEIN SEQUENCE OF 1-11 AND 84-107</scope>
    <scope>MASS SPECTROMETRY</scope>
    <source>
        <strain>JRS4 / Serotype M6</strain>
    </source>
</reference>